<gene>
    <name evidence="1" type="primary">rplC</name>
    <name type="ordered locus">BWG_3011</name>
</gene>
<feature type="chain" id="PRO_1000214506" description="Large ribosomal subunit protein uL3">
    <location>
        <begin position="1"/>
        <end position="209"/>
    </location>
</feature>
<feature type="modified residue" description="N5-methylglutamine" evidence="1">
    <location>
        <position position="150"/>
    </location>
</feature>
<evidence type="ECO:0000255" key="1">
    <source>
        <dbReference type="HAMAP-Rule" id="MF_01325"/>
    </source>
</evidence>
<evidence type="ECO:0000305" key="2"/>
<proteinExistence type="inferred from homology"/>
<comment type="function">
    <text evidence="1">One of the primary rRNA binding proteins, it binds directly near the 3'-end of the 23S rRNA, where it nucleates assembly of the 50S subunit.</text>
</comment>
<comment type="subunit">
    <text evidence="1">Part of the 50S ribosomal subunit. Forms a cluster with proteins L14 and L19.</text>
</comment>
<comment type="PTM">
    <text evidence="1">Methylated by PrmB.</text>
</comment>
<comment type="similarity">
    <text evidence="1">Belongs to the universal ribosomal protein uL3 family.</text>
</comment>
<keyword id="KW-0488">Methylation</keyword>
<keyword id="KW-0687">Ribonucleoprotein</keyword>
<keyword id="KW-0689">Ribosomal protein</keyword>
<keyword id="KW-0694">RNA-binding</keyword>
<keyword id="KW-0699">rRNA-binding</keyword>
<organism>
    <name type="scientific">Escherichia coli (strain K12 / MC4100 / BW2952)</name>
    <dbReference type="NCBI Taxonomy" id="595496"/>
    <lineage>
        <taxon>Bacteria</taxon>
        <taxon>Pseudomonadati</taxon>
        <taxon>Pseudomonadota</taxon>
        <taxon>Gammaproteobacteria</taxon>
        <taxon>Enterobacterales</taxon>
        <taxon>Enterobacteriaceae</taxon>
        <taxon>Escherichia</taxon>
    </lineage>
</organism>
<sequence length="209" mass="22244">MIGLVGKKVGMTRIFTEDGVSIPVTVIEVEANRVTQVKDLANDGYRAIQVTTGAKKANRVTKPEAGHFAKAGVEAGRGLWEFRLAEGEEFTVGQSISVELFADVKKVDVTGTSKGKGFAGTVKRWNFRTQDATHGNSLSHRVPGSIGQNQTPGKVFKGKKMAGQMGNERVTVQSLDVVRVDAERNLLLVKGAVPGATGSDLIVKPAVKA</sequence>
<dbReference type="EMBL" id="CP001396">
    <property type="protein sequence ID" value="ACR61866.1"/>
    <property type="molecule type" value="Genomic_DNA"/>
</dbReference>
<dbReference type="RefSeq" id="WP_000579833.1">
    <property type="nucleotide sequence ID" value="NC_012759.1"/>
</dbReference>
<dbReference type="SMR" id="C4ZUH5"/>
<dbReference type="GeneID" id="86948184"/>
<dbReference type="KEGG" id="ebw:BWG_3011"/>
<dbReference type="HOGENOM" id="CLU_044142_4_1_6"/>
<dbReference type="GO" id="GO:0022625">
    <property type="term" value="C:cytosolic large ribosomal subunit"/>
    <property type="evidence" value="ECO:0007669"/>
    <property type="project" value="TreeGrafter"/>
</dbReference>
<dbReference type="GO" id="GO:0019843">
    <property type="term" value="F:rRNA binding"/>
    <property type="evidence" value="ECO:0007669"/>
    <property type="project" value="UniProtKB-UniRule"/>
</dbReference>
<dbReference type="GO" id="GO:0003735">
    <property type="term" value="F:structural constituent of ribosome"/>
    <property type="evidence" value="ECO:0007669"/>
    <property type="project" value="InterPro"/>
</dbReference>
<dbReference type="GO" id="GO:0006412">
    <property type="term" value="P:translation"/>
    <property type="evidence" value="ECO:0007669"/>
    <property type="project" value="UniProtKB-UniRule"/>
</dbReference>
<dbReference type="FunFam" id="2.40.30.10:FF:000004">
    <property type="entry name" value="50S ribosomal protein L3"/>
    <property type="match status" value="1"/>
</dbReference>
<dbReference type="FunFam" id="3.30.160.810:FF:000001">
    <property type="entry name" value="50S ribosomal protein L3"/>
    <property type="match status" value="1"/>
</dbReference>
<dbReference type="Gene3D" id="3.30.160.810">
    <property type="match status" value="1"/>
</dbReference>
<dbReference type="Gene3D" id="2.40.30.10">
    <property type="entry name" value="Translation factors"/>
    <property type="match status" value="1"/>
</dbReference>
<dbReference type="HAMAP" id="MF_01325_B">
    <property type="entry name" value="Ribosomal_uL3_B"/>
    <property type="match status" value="1"/>
</dbReference>
<dbReference type="InterPro" id="IPR000597">
    <property type="entry name" value="Ribosomal_uL3"/>
</dbReference>
<dbReference type="InterPro" id="IPR019927">
    <property type="entry name" value="Ribosomal_uL3_bac/org-type"/>
</dbReference>
<dbReference type="InterPro" id="IPR019926">
    <property type="entry name" value="Ribosomal_uL3_CS"/>
</dbReference>
<dbReference type="InterPro" id="IPR009000">
    <property type="entry name" value="Transl_B-barrel_sf"/>
</dbReference>
<dbReference type="NCBIfam" id="TIGR03625">
    <property type="entry name" value="L3_bact"/>
    <property type="match status" value="1"/>
</dbReference>
<dbReference type="PANTHER" id="PTHR11229">
    <property type="entry name" value="50S RIBOSOMAL PROTEIN L3"/>
    <property type="match status" value="1"/>
</dbReference>
<dbReference type="PANTHER" id="PTHR11229:SF16">
    <property type="entry name" value="LARGE RIBOSOMAL SUBUNIT PROTEIN UL3C"/>
    <property type="match status" value="1"/>
</dbReference>
<dbReference type="Pfam" id="PF00297">
    <property type="entry name" value="Ribosomal_L3"/>
    <property type="match status" value="1"/>
</dbReference>
<dbReference type="SUPFAM" id="SSF50447">
    <property type="entry name" value="Translation proteins"/>
    <property type="match status" value="1"/>
</dbReference>
<dbReference type="PROSITE" id="PS00474">
    <property type="entry name" value="RIBOSOMAL_L3"/>
    <property type="match status" value="1"/>
</dbReference>
<reference key="1">
    <citation type="journal article" date="2009" name="J. Bacteriol.">
        <title>Genomic sequencing reveals regulatory mutations and recombinational events in the widely used MC4100 lineage of Escherichia coli K-12.</title>
        <authorList>
            <person name="Ferenci T."/>
            <person name="Zhou Z."/>
            <person name="Betteridge T."/>
            <person name="Ren Y."/>
            <person name="Liu Y."/>
            <person name="Feng L."/>
            <person name="Reeves P.R."/>
            <person name="Wang L."/>
        </authorList>
    </citation>
    <scope>NUCLEOTIDE SEQUENCE [LARGE SCALE GENOMIC DNA]</scope>
    <source>
        <strain>K12 / MC4100 / BW2952</strain>
    </source>
</reference>
<protein>
    <recommendedName>
        <fullName evidence="1">Large ribosomal subunit protein uL3</fullName>
    </recommendedName>
    <alternativeName>
        <fullName evidence="2">50S ribosomal protein L3</fullName>
    </alternativeName>
</protein>
<name>RL3_ECOBW</name>
<accession>C4ZUH5</accession>